<dbReference type="EMBL" id="CP000568">
    <property type="protein sequence ID" value="ABN53576.1"/>
    <property type="molecule type" value="Genomic_DNA"/>
</dbReference>
<dbReference type="RefSeq" id="WP_003513335.1">
    <property type="nucleotide sequence ID" value="NC_009012.1"/>
</dbReference>
<dbReference type="SMR" id="A3DHZ7"/>
<dbReference type="STRING" id="203119.Cthe_2374"/>
<dbReference type="GeneID" id="35803368"/>
<dbReference type="KEGG" id="cth:Cthe_2374"/>
<dbReference type="eggNOG" id="COG1195">
    <property type="taxonomic scope" value="Bacteria"/>
</dbReference>
<dbReference type="HOGENOM" id="CLU_040267_0_1_9"/>
<dbReference type="OrthoDB" id="9803889at2"/>
<dbReference type="Proteomes" id="UP000002145">
    <property type="component" value="Chromosome"/>
</dbReference>
<dbReference type="GO" id="GO:0005737">
    <property type="term" value="C:cytoplasm"/>
    <property type="evidence" value="ECO:0007669"/>
    <property type="project" value="UniProtKB-SubCell"/>
</dbReference>
<dbReference type="GO" id="GO:0005524">
    <property type="term" value="F:ATP binding"/>
    <property type="evidence" value="ECO:0007669"/>
    <property type="project" value="UniProtKB-UniRule"/>
</dbReference>
<dbReference type="GO" id="GO:0003697">
    <property type="term" value="F:single-stranded DNA binding"/>
    <property type="evidence" value="ECO:0007669"/>
    <property type="project" value="UniProtKB-UniRule"/>
</dbReference>
<dbReference type="GO" id="GO:0006260">
    <property type="term" value="P:DNA replication"/>
    <property type="evidence" value="ECO:0007669"/>
    <property type="project" value="UniProtKB-UniRule"/>
</dbReference>
<dbReference type="GO" id="GO:0000731">
    <property type="term" value="P:DNA synthesis involved in DNA repair"/>
    <property type="evidence" value="ECO:0007669"/>
    <property type="project" value="TreeGrafter"/>
</dbReference>
<dbReference type="GO" id="GO:0006302">
    <property type="term" value="P:double-strand break repair"/>
    <property type="evidence" value="ECO:0007669"/>
    <property type="project" value="TreeGrafter"/>
</dbReference>
<dbReference type="GO" id="GO:0009432">
    <property type="term" value="P:SOS response"/>
    <property type="evidence" value="ECO:0007669"/>
    <property type="project" value="UniProtKB-UniRule"/>
</dbReference>
<dbReference type="CDD" id="cd03242">
    <property type="entry name" value="ABC_RecF"/>
    <property type="match status" value="1"/>
</dbReference>
<dbReference type="Gene3D" id="3.40.50.300">
    <property type="entry name" value="P-loop containing nucleotide triphosphate hydrolases"/>
    <property type="match status" value="1"/>
</dbReference>
<dbReference type="Gene3D" id="1.20.1050.90">
    <property type="entry name" value="RecF/RecN/SMC, N-terminal domain"/>
    <property type="match status" value="1"/>
</dbReference>
<dbReference type="HAMAP" id="MF_00365">
    <property type="entry name" value="RecF"/>
    <property type="match status" value="1"/>
</dbReference>
<dbReference type="InterPro" id="IPR001238">
    <property type="entry name" value="DNA-binding_RecF"/>
</dbReference>
<dbReference type="InterPro" id="IPR018078">
    <property type="entry name" value="DNA-binding_RecF_CS"/>
</dbReference>
<dbReference type="InterPro" id="IPR027417">
    <property type="entry name" value="P-loop_NTPase"/>
</dbReference>
<dbReference type="InterPro" id="IPR003395">
    <property type="entry name" value="RecF/RecN/SMC_N"/>
</dbReference>
<dbReference type="InterPro" id="IPR042174">
    <property type="entry name" value="RecF_2"/>
</dbReference>
<dbReference type="NCBIfam" id="TIGR00611">
    <property type="entry name" value="recf"/>
    <property type="match status" value="1"/>
</dbReference>
<dbReference type="PANTHER" id="PTHR32182">
    <property type="entry name" value="DNA REPLICATION AND REPAIR PROTEIN RECF"/>
    <property type="match status" value="1"/>
</dbReference>
<dbReference type="PANTHER" id="PTHR32182:SF0">
    <property type="entry name" value="DNA REPLICATION AND REPAIR PROTEIN RECF"/>
    <property type="match status" value="1"/>
</dbReference>
<dbReference type="Pfam" id="PF02463">
    <property type="entry name" value="SMC_N"/>
    <property type="match status" value="1"/>
</dbReference>
<dbReference type="SUPFAM" id="SSF52540">
    <property type="entry name" value="P-loop containing nucleoside triphosphate hydrolases"/>
    <property type="match status" value="1"/>
</dbReference>
<dbReference type="PROSITE" id="PS00617">
    <property type="entry name" value="RECF_1"/>
    <property type="match status" value="1"/>
</dbReference>
<dbReference type="PROSITE" id="PS00618">
    <property type="entry name" value="RECF_2"/>
    <property type="match status" value="1"/>
</dbReference>
<reference key="1">
    <citation type="submission" date="2007-02" db="EMBL/GenBank/DDBJ databases">
        <title>Complete sequence of Clostridium thermocellum ATCC 27405.</title>
        <authorList>
            <consortium name="US DOE Joint Genome Institute"/>
            <person name="Copeland A."/>
            <person name="Lucas S."/>
            <person name="Lapidus A."/>
            <person name="Barry K."/>
            <person name="Detter J.C."/>
            <person name="Glavina del Rio T."/>
            <person name="Hammon N."/>
            <person name="Israni S."/>
            <person name="Dalin E."/>
            <person name="Tice H."/>
            <person name="Pitluck S."/>
            <person name="Chertkov O."/>
            <person name="Brettin T."/>
            <person name="Bruce D."/>
            <person name="Han C."/>
            <person name="Tapia R."/>
            <person name="Gilna P."/>
            <person name="Schmutz J."/>
            <person name="Larimer F."/>
            <person name="Land M."/>
            <person name="Hauser L."/>
            <person name="Kyrpides N."/>
            <person name="Mikhailova N."/>
            <person name="Wu J.H.D."/>
            <person name="Newcomb M."/>
            <person name="Richardson P."/>
        </authorList>
    </citation>
    <scope>NUCLEOTIDE SEQUENCE [LARGE SCALE GENOMIC DNA]</scope>
    <source>
        <strain>ATCC 27405 / DSM 1237 / JCM 9322 / NBRC 103400 / NCIMB 10682 / NRRL B-4536 / VPI 7372</strain>
    </source>
</reference>
<gene>
    <name evidence="1" type="primary">recF</name>
    <name type="ordered locus">Cthe_2374</name>
</gene>
<feature type="chain" id="PRO_1000048516" description="DNA replication and repair protein RecF">
    <location>
        <begin position="1"/>
        <end position="369"/>
    </location>
</feature>
<feature type="binding site" evidence="1">
    <location>
        <begin position="30"/>
        <end position="37"/>
    </location>
    <ligand>
        <name>ATP</name>
        <dbReference type="ChEBI" id="CHEBI:30616"/>
    </ligand>
</feature>
<keyword id="KW-0067">ATP-binding</keyword>
<keyword id="KW-0963">Cytoplasm</keyword>
<keyword id="KW-0227">DNA damage</keyword>
<keyword id="KW-0234">DNA repair</keyword>
<keyword id="KW-0235">DNA replication</keyword>
<keyword id="KW-0238">DNA-binding</keyword>
<keyword id="KW-0547">Nucleotide-binding</keyword>
<keyword id="KW-1185">Reference proteome</keyword>
<keyword id="KW-0742">SOS response</keyword>
<evidence type="ECO:0000255" key="1">
    <source>
        <dbReference type="HAMAP-Rule" id="MF_00365"/>
    </source>
</evidence>
<organism>
    <name type="scientific">Acetivibrio thermocellus (strain ATCC 27405 / DSM 1237 / JCM 9322 / NBRC 103400 / NCIMB 10682 / NRRL B-4536 / VPI 7372)</name>
    <name type="common">Clostridium thermocellum</name>
    <dbReference type="NCBI Taxonomy" id="203119"/>
    <lineage>
        <taxon>Bacteria</taxon>
        <taxon>Bacillati</taxon>
        <taxon>Bacillota</taxon>
        <taxon>Clostridia</taxon>
        <taxon>Eubacteriales</taxon>
        <taxon>Oscillospiraceae</taxon>
        <taxon>Acetivibrio</taxon>
    </lineage>
</organism>
<comment type="function">
    <text evidence="1">The RecF protein is involved in DNA metabolism; it is required for DNA replication and normal SOS inducibility. RecF binds preferentially to single-stranded, linear DNA. It also seems to bind ATP.</text>
</comment>
<comment type="subcellular location">
    <subcellularLocation>
        <location evidence="1">Cytoplasm</location>
    </subcellularLocation>
</comment>
<comment type="similarity">
    <text evidence="1">Belongs to the RecF family.</text>
</comment>
<protein>
    <recommendedName>
        <fullName evidence="1">DNA replication and repair protein RecF</fullName>
    </recommendedName>
</protein>
<name>RECF_ACET2</name>
<proteinExistence type="inferred from homology"/>
<sequence length="369" mass="43087">MYIDRILLKNFRNYKDETIKFSKNLNIIYGQNAQGKTNIIEAVFLCASGRSHRTSKDTELVNIDGTGFSVLLDLESSEGRKKIEIDYECGKKKVVKINEIPLKKIGNLMGNLLAVIFSPEDILIIKEGPSERRRFIDITLCQLKPSYFYDLQQYNKVLSQRNMLLKEIQYKRNLLDTLEVWDYKMAELSSRIMTTRSEFIKRLCEISKKIHLKLTDGSEIMEIKYSPSVDLHDLSNPSEIKNEFIRQLNSIRDIELKRCVTLIGPHRDDYEMELNGLNLKMFGSQGQQRTSLLSLKLAEIEIIKSETDEDPVLLLDDVMSELDFKRREFLLENIRNVQTFITCTDKELFENRNFGDNLYIRVEAGRTYY</sequence>
<accession>A3DHZ7</accession>